<organism>
    <name type="scientific">Afipia carboxidovorans (strain ATCC 49405 / DSM 1227 / KCTC 32145 / OM5)</name>
    <name type="common">Oligotropha carboxidovorans</name>
    <dbReference type="NCBI Taxonomy" id="504832"/>
    <lineage>
        <taxon>Bacteria</taxon>
        <taxon>Pseudomonadati</taxon>
        <taxon>Pseudomonadota</taxon>
        <taxon>Alphaproteobacteria</taxon>
        <taxon>Hyphomicrobiales</taxon>
        <taxon>Nitrobacteraceae</taxon>
        <taxon>Afipia</taxon>
    </lineage>
</organism>
<protein>
    <recommendedName>
        <fullName evidence="1">Small ribosomal subunit protein uS8</fullName>
    </recommendedName>
    <alternativeName>
        <fullName evidence="2">30S ribosomal protein S8</fullName>
    </alternativeName>
</protein>
<name>RS8_AFIC5</name>
<proteinExistence type="inferred from homology"/>
<evidence type="ECO:0000255" key="1">
    <source>
        <dbReference type="HAMAP-Rule" id="MF_01302"/>
    </source>
</evidence>
<evidence type="ECO:0000305" key="2"/>
<gene>
    <name evidence="1" type="primary">rpsH</name>
    <name type="ordered locus">OCAR_5691</name>
    <name type="ordered locus">OCA5_c23160</name>
</gene>
<sequence length="132" mass="14523">MSTHDPISDLITRIRNAQMRSKSKVSTPGSKMRASVLEVLKSEGYIRGYASVEHASGHNELEIELKYFDGEPVIREIERVSKPGRRVYASVKNLPRVNNGLGISVLSTPKGIMADHAAREANVGGEVLFTVF</sequence>
<accession>B6JEX9</accession>
<accession>F8BZB3</accession>
<dbReference type="EMBL" id="CP001196">
    <property type="protein sequence ID" value="ACI92819.1"/>
    <property type="molecule type" value="Genomic_DNA"/>
</dbReference>
<dbReference type="EMBL" id="CP002826">
    <property type="protein sequence ID" value="AEI07016.1"/>
    <property type="molecule type" value="Genomic_DNA"/>
</dbReference>
<dbReference type="RefSeq" id="WP_012562848.1">
    <property type="nucleotide sequence ID" value="NC_015684.1"/>
</dbReference>
<dbReference type="SMR" id="B6JEX9"/>
<dbReference type="STRING" id="504832.OCA5_c23160"/>
<dbReference type="KEGG" id="oca:OCAR_5691"/>
<dbReference type="KEGG" id="ocg:OCA5_c23160"/>
<dbReference type="PATRIC" id="fig|504832.7.peg.2441"/>
<dbReference type="eggNOG" id="COG0096">
    <property type="taxonomic scope" value="Bacteria"/>
</dbReference>
<dbReference type="HOGENOM" id="CLU_098428_0_0_5"/>
<dbReference type="OrthoDB" id="9802617at2"/>
<dbReference type="Proteomes" id="UP000007730">
    <property type="component" value="Chromosome"/>
</dbReference>
<dbReference type="GO" id="GO:1990904">
    <property type="term" value="C:ribonucleoprotein complex"/>
    <property type="evidence" value="ECO:0007669"/>
    <property type="project" value="UniProtKB-KW"/>
</dbReference>
<dbReference type="GO" id="GO:0005840">
    <property type="term" value="C:ribosome"/>
    <property type="evidence" value="ECO:0007669"/>
    <property type="project" value="UniProtKB-KW"/>
</dbReference>
<dbReference type="GO" id="GO:0019843">
    <property type="term" value="F:rRNA binding"/>
    <property type="evidence" value="ECO:0007669"/>
    <property type="project" value="UniProtKB-UniRule"/>
</dbReference>
<dbReference type="GO" id="GO:0003735">
    <property type="term" value="F:structural constituent of ribosome"/>
    <property type="evidence" value="ECO:0007669"/>
    <property type="project" value="InterPro"/>
</dbReference>
<dbReference type="GO" id="GO:0006412">
    <property type="term" value="P:translation"/>
    <property type="evidence" value="ECO:0007669"/>
    <property type="project" value="UniProtKB-UniRule"/>
</dbReference>
<dbReference type="FunFam" id="3.30.1370.30:FF:000002">
    <property type="entry name" value="30S ribosomal protein S8"/>
    <property type="match status" value="1"/>
</dbReference>
<dbReference type="FunFam" id="3.30.1490.10:FF:000001">
    <property type="entry name" value="30S ribosomal protein S8"/>
    <property type="match status" value="1"/>
</dbReference>
<dbReference type="Gene3D" id="3.30.1370.30">
    <property type="match status" value="1"/>
</dbReference>
<dbReference type="Gene3D" id="3.30.1490.10">
    <property type="match status" value="1"/>
</dbReference>
<dbReference type="HAMAP" id="MF_01302_B">
    <property type="entry name" value="Ribosomal_uS8_B"/>
    <property type="match status" value="1"/>
</dbReference>
<dbReference type="InterPro" id="IPR000630">
    <property type="entry name" value="Ribosomal_uS8"/>
</dbReference>
<dbReference type="InterPro" id="IPR047863">
    <property type="entry name" value="Ribosomal_uS8_CS"/>
</dbReference>
<dbReference type="InterPro" id="IPR035987">
    <property type="entry name" value="Ribosomal_uS8_sf"/>
</dbReference>
<dbReference type="NCBIfam" id="NF001109">
    <property type="entry name" value="PRK00136.1"/>
    <property type="match status" value="1"/>
</dbReference>
<dbReference type="PANTHER" id="PTHR11758">
    <property type="entry name" value="40S RIBOSOMAL PROTEIN S15A"/>
    <property type="match status" value="1"/>
</dbReference>
<dbReference type="Pfam" id="PF00410">
    <property type="entry name" value="Ribosomal_S8"/>
    <property type="match status" value="1"/>
</dbReference>
<dbReference type="SUPFAM" id="SSF56047">
    <property type="entry name" value="Ribosomal protein S8"/>
    <property type="match status" value="1"/>
</dbReference>
<dbReference type="PROSITE" id="PS00053">
    <property type="entry name" value="RIBOSOMAL_S8"/>
    <property type="match status" value="1"/>
</dbReference>
<reference key="1">
    <citation type="journal article" date="2008" name="J. Bacteriol.">
        <title>Genome sequence of the chemolithoautotrophic bacterium Oligotropha carboxidovorans OM5T.</title>
        <authorList>
            <person name="Paul D."/>
            <person name="Bridges S."/>
            <person name="Burgess S.C."/>
            <person name="Dandass Y."/>
            <person name="Lawrence M.L."/>
        </authorList>
    </citation>
    <scope>NUCLEOTIDE SEQUENCE [LARGE SCALE GENOMIC DNA]</scope>
    <source>
        <strain>ATCC 49405 / DSM 1227 / KCTC 32145 / OM5</strain>
    </source>
</reference>
<reference key="2">
    <citation type="journal article" date="2011" name="J. Bacteriol.">
        <title>Complete genome sequences of the chemolithoautotrophic Oligotropha carboxidovorans strains OM4 and OM5.</title>
        <authorList>
            <person name="Volland S."/>
            <person name="Rachinger M."/>
            <person name="Strittmatter A."/>
            <person name="Daniel R."/>
            <person name="Gottschalk G."/>
            <person name="Meyer O."/>
        </authorList>
    </citation>
    <scope>NUCLEOTIDE SEQUENCE [LARGE SCALE GENOMIC DNA]</scope>
    <source>
        <strain>ATCC 49405 / DSM 1227 / KCTC 32145 / OM5</strain>
    </source>
</reference>
<comment type="function">
    <text evidence="1">One of the primary rRNA binding proteins, it binds directly to 16S rRNA central domain where it helps coordinate assembly of the platform of the 30S subunit.</text>
</comment>
<comment type="subunit">
    <text evidence="1">Part of the 30S ribosomal subunit. Contacts proteins S5 and S12.</text>
</comment>
<comment type="similarity">
    <text evidence="1">Belongs to the universal ribosomal protein uS8 family.</text>
</comment>
<feature type="chain" id="PRO_1000140587" description="Small ribosomal subunit protein uS8">
    <location>
        <begin position="1"/>
        <end position="132"/>
    </location>
</feature>
<keyword id="KW-1185">Reference proteome</keyword>
<keyword id="KW-0687">Ribonucleoprotein</keyword>
<keyword id="KW-0689">Ribosomal protein</keyword>
<keyword id="KW-0694">RNA-binding</keyword>
<keyword id="KW-0699">rRNA-binding</keyword>